<comment type="function">
    <text evidence="2">Catalyzes the transamination between an unstable intermediate ((S)-ureidoglycine) and the end product of purine catabolism (glyoxylate) to yield oxalurate and glycine. Glyoxylate is the preferred substrate, but other amino-group acceptors can be used.</text>
</comment>
<comment type="catalytic activity">
    <reaction evidence="2">
        <text>(S)-2-ureidoglycine + glyoxylate = N-carbamoyl-2-oxoglycine + glycine</text>
        <dbReference type="Rhea" id="RHEA:33867"/>
        <dbReference type="ChEBI" id="CHEBI:36655"/>
        <dbReference type="ChEBI" id="CHEBI:57305"/>
        <dbReference type="ChEBI" id="CHEBI:57824"/>
        <dbReference type="ChEBI" id="CHEBI:59947"/>
        <dbReference type="EC" id="2.6.1.112"/>
    </reaction>
</comment>
<comment type="cofactor">
    <cofactor evidence="2">
        <name>pyridoxal 5'-phosphate</name>
        <dbReference type="ChEBI" id="CHEBI:597326"/>
    </cofactor>
</comment>
<comment type="pathway">
    <text evidence="6 7">Nitrogen metabolism; (S)-allantoin degradation.</text>
</comment>
<comment type="subunit">
    <text evidence="2">Homodimer.</text>
</comment>
<comment type="induction">
    <text evidence="1">Expression is very low in excess nitrogen (glutamate plus ammonia) and is induced during limiting-nitrogen conditions (glutamate). Expression is further induced when allantoin is added during limiting-nitrogen conditions.</text>
</comment>
<comment type="similarity">
    <text evidence="5">Belongs to the class-V pyridoxal-phosphate-dependent aminotransferase family.</text>
</comment>
<feature type="chain" id="PRO_0000150244" description="(S)-ureidoglycine--glyoxylate transaminase">
    <location>
        <begin position="1"/>
        <end position="416"/>
    </location>
</feature>
<feature type="modified residue" description="N6-(pyridoxal phosphate)lysine" evidence="2">
    <location>
        <position position="198"/>
    </location>
</feature>
<feature type="mutagenesis site" description="5-fold decrease in transamination activity." evidence="2">
    <original>Q</original>
    <variation>H</variation>
    <location>
        <position position="37"/>
    </location>
</feature>
<feature type="mutagenesis site" description="9-fold decrease in transamination activity." evidence="2">
    <original>N</original>
    <variation>S</variation>
    <location>
        <position position="264"/>
    </location>
</feature>
<feature type="mutagenesis site" description="Loss of transamination activity." evidence="2">
    <original>N</original>
    <variation>Y</variation>
    <location>
        <position position="264"/>
    </location>
</feature>
<feature type="strand" evidence="9">
    <location>
        <begin position="16"/>
        <end position="19"/>
    </location>
</feature>
<feature type="helix" evidence="9">
    <location>
        <begin position="24"/>
        <end position="29"/>
    </location>
</feature>
<feature type="helix" evidence="9">
    <location>
        <begin position="40"/>
        <end position="56"/>
    </location>
</feature>
<feature type="strand" evidence="9">
    <location>
        <begin position="62"/>
        <end position="69"/>
    </location>
</feature>
<feature type="helix" evidence="9">
    <location>
        <begin position="71"/>
        <end position="82"/>
    </location>
</feature>
<feature type="strand" evidence="9">
    <location>
        <begin position="88"/>
        <end position="95"/>
    </location>
</feature>
<feature type="helix" evidence="9">
    <location>
        <begin position="96"/>
        <end position="107"/>
    </location>
</feature>
<feature type="strand" evidence="9">
    <location>
        <begin position="111"/>
        <end position="116"/>
    </location>
</feature>
<feature type="helix" evidence="9">
    <location>
        <begin position="125"/>
        <end position="135"/>
    </location>
</feature>
<feature type="strand" evidence="9">
    <location>
        <begin position="138"/>
        <end position="146"/>
    </location>
</feature>
<feature type="turn" evidence="9">
    <location>
        <begin position="147"/>
        <end position="150"/>
    </location>
</feature>
<feature type="helix" evidence="9">
    <location>
        <begin position="156"/>
        <end position="164"/>
    </location>
</feature>
<feature type="strand" evidence="9">
    <location>
        <begin position="168"/>
        <end position="172"/>
    </location>
</feature>
<feature type="turn" evidence="9">
    <location>
        <begin position="174"/>
        <end position="179"/>
    </location>
</feature>
<feature type="turn" evidence="9">
    <location>
        <begin position="184"/>
        <end position="188"/>
    </location>
</feature>
<feature type="strand" evidence="9">
    <location>
        <begin position="190"/>
        <end position="193"/>
    </location>
</feature>
<feature type="strand" evidence="9">
    <location>
        <begin position="196"/>
        <end position="198"/>
    </location>
</feature>
<feature type="strand" evidence="9">
    <location>
        <begin position="204"/>
        <end position="211"/>
    </location>
</feature>
<feature type="helix" evidence="9">
    <location>
        <begin position="213"/>
        <end position="220"/>
    </location>
</feature>
<feature type="helix" evidence="9">
    <location>
        <begin position="251"/>
        <end position="257"/>
    </location>
</feature>
<feature type="helix" evidence="9">
    <location>
        <begin position="270"/>
        <end position="286"/>
    </location>
</feature>
<feature type="helix" evidence="9">
    <location>
        <begin position="288"/>
        <end position="308"/>
    </location>
</feature>
<feature type="helix" evidence="9">
    <location>
        <begin position="317"/>
        <end position="319"/>
    </location>
</feature>
<feature type="strand" evidence="9">
    <location>
        <begin position="324"/>
        <end position="328"/>
    </location>
</feature>
<feature type="helix" evidence="9">
    <location>
        <begin position="335"/>
        <end position="346"/>
    </location>
</feature>
<feature type="turn" evidence="9">
    <location>
        <begin position="356"/>
        <end position="360"/>
    </location>
</feature>
<feature type="strand" evidence="9">
    <location>
        <begin position="361"/>
        <end position="365"/>
    </location>
</feature>
<feature type="helix" evidence="9">
    <location>
        <begin position="368"/>
        <end position="370"/>
    </location>
</feature>
<feature type="helix" evidence="9">
    <location>
        <begin position="373"/>
        <end position="389"/>
    </location>
</feature>
<feature type="helix" evidence="9">
    <location>
        <begin position="398"/>
        <end position="408"/>
    </location>
</feature>
<evidence type="ECO:0000269" key="1">
    <source>
    </source>
</evidence>
<evidence type="ECO:0000269" key="2">
    <source>
    </source>
</evidence>
<evidence type="ECO:0000303" key="3">
    <source>
    </source>
</evidence>
<evidence type="ECO:0000303" key="4">
    <source>
    </source>
</evidence>
<evidence type="ECO:0000305" key="5"/>
<evidence type="ECO:0000305" key="6">
    <source>
    </source>
</evidence>
<evidence type="ECO:0000305" key="7">
    <source>
    </source>
</evidence>
<evidence type="ECO:0007744" key="8">
    <source>
        <dbReference type="PDB" id="3ISL"/>
    </source>
</evidence>
<evidence type="ECO:0007829" key="9">
    <source>
        <dbReference type="PDB" id="3ISL"/>
    </source>
</evidence>
<name>PUCG_BACSU</name>
<dbReference type="EC" id="2.6.1.112" evidence="2"/>
<dbReference type="EMBL" id="AL009126">
    <property type="protein sequence ID" value="CAB15242.1"/>
    <property type="molecule type" value="Genomic_DNA"/>
</dbReference>
<dbReference type="PIR" id="F70017">
    <property type="entry name" value="F70017"/>
</dbReference>
<dbReference type="RefSeq" id="NP_391132.1">
    <property type="nucleotide sequence ID" value="NC_000964.3"/>
</dbReference>
<dbReference type="RefSeq" id="WP_003244520.1">
    <property type="nucleotide sequence ID" value="NZ_OZ025638.1"/>
</dbReference>
<dbReference type="PDB" id="3ISL">
    <property type="method" value="X-ray"/>
    <property type="resolution" value="2.06 A"/>
    <property type="chains" value="A/B=1-416"/>
</dbReference>
<dbReference type="PDBsum" id="3ISL"/>
<dbReference type="SMR" id="O32148"/>
<dbReference type="FunCoup" id="O32148">
    <property type="interactions" value="704"/>
</dbReference>
<dbReference type="STRING" id="224308.BSU32520"/>
<dbReference type="PaxDb" id="224308-BSU32520"/>
<dbReference type="EnsemblBacteria" id="CAB15242">
    <property type="protein sequence ID" value="CAB15242"/>
    <property type="gene ID" value="BSU_32520"/>
</dbReference>
<dbReference type="GeneID" id="936676"/>
<dbReference type="KEGG" id="bsu:BSU32520"/>
<dbReference type="PATRIC" id="fig|224308.43.peg.3402"/>
<dbReference type="eggNOG" id="COG0075">
    <property type="taxonomic scope" value="Bacteria"/>
</dbReference>
<dbReference type="InParanoid" id="O32148"/>
<dbReference type="OrthoDB" id="389074at2"/>
<dbReference type="PhylomeDB" id="O32148"/>
<dbReference type="BioCyc" id="BSUB:BSU32520-MONOMER"/>
<dbReference type="UniPathway" id="UPA00395"/>
<dbReference type="EvolutionaryTrace" id="O32148"/>
<dbReference type="Proteomes" id="UP000001570">
    <property type="component" value="Chromosome"/>
</dbReference>
<dbReference type="GO" id="GO:0008453">
    <property type="term" value="F:alanine-glyoxylate transaminase activity"/>
    <property type="evidence" value="ECO:0000318"/>
    <property type="project" value="GO_Central"/>
</dbReference>
<dbReference type="GO" id="GO:0004760">
    <property type="term" value="F:L-serine-pyruvate transaminase activity"/>
    <property type="evidence" value="ECO:0000318"/>
    <property type="project" value="GO_Central"/>
</dbReference>
<dbReference type="GO" id="GO:0000256">
    <property type="term" value="P:allantoin catabolic process"/>
    <property type="evidence" value="ECO:0007669"/>
    <property type="project" value="UniProtKB-UniPathway"/>
</dbReference>
<dbReference type="GO" id="GO:0019265">
    <property type="term" value="P:glycine biosynthetic process, by transamination of glyoxylate"/>
    <property type="evidence" value="ECO:0000318"/>
    <property type="project" value="GO_Central"/>
</dbReference>
<dbReference type="GO" id="GO:0006144">
    <property type="term" value="P:purine nucleobase metabolic process"/>
    <property type="evidence" value="ECO:0007669"/>
    <property type="project" value="UniProtKB-KW"/>
</dbReference>
<dbReference type="FunFam" id="3.90.1150.10:FF:000039">
    <property type="entry name" value="Serine--pyruvate aminotransferase"/>
    <property type="match status" value="1"/>
</dbReference>
<dbReference type="FunFam" id="3.40.640.10:FF:000027">
    <property type="entry name" value="Serine--pyruvate aminotransferase, mitochondrial"/>
    <property type="match status" value="1"/>
</dbReference>
<dbReference type="Gene3D" id="3.90.1150.10">
    <property type="entry name" value="Aspartate Aminotransferase, domain 1"/>
    <property type="match status" value="1"/>
</dbReference>
<dbReference type="Gene3D" id="3.40.640.10">
    <property type="entry name" value="Type I PLP-dependent aspartate aminotransferase-like (Major domain)"/>
    <property type="match status" value="1"/>
</dbReference>
<dbReference type="InterPro" id="IPR000192">
    <property type="entry name" value="Aminotrans_V_dom"/>
</dbReference>
<dbReference type="InterPro" id="IPR020578">
    <property type="entry name" value="Aminotrans_V_PyrdxlP_BS"/>
</dbReference>
<dbReference type="InterPro" id="IPR015424">
    <property type="entry name" value="PyrdxlP-dep_Trfase"/>
</dbReference>
<dbReference type="InterPro" id="IPR015421">
    <property type="entry name" value="PyrdxlP-dep_Trfase_major"/>
</dbReference>
<dbReference type="InterPro" id="IPR015422">
    <property type="entry name" value="PyrdxlP-dep_Trfase_small"/>
</dbReference>
<dbReference type="InterPro" id="IPR024169">
    <property type="entry name" value="SP_NH2Trfase/AEP_transaminase"/>
</dbReference>
<dbReference type="PANTHER" id="PTHR21152:SF40">
    <property type="entry name" value="ALANINE--GLYOXYLATE AMINOTRANSFERASE"/>
    <property type="match status" value="1"/>
</dbReference>
<dbReference type="PANTHER" id="PTHR21152">
    <property type="entry name" value="AMINOTRANSFERASE CLASS V"/>
    <property type="match status" value="1"/>
</dbReference>
<dbReference type="Pfam" id="PF00266">
    <property type="entry name" value="Aminotran_5"/>
    <property type="match status" value="1"/>
</dbReference>
<dbReference type="PIRSF" id="PIRSF000524">
    <property type="entry name" value="SPT"/>
    <property type="match status" value="1"/>
</dbReference>
<dbReference type="SUPFAM" id="SSF53383">
    <property type="entry name" value="PLP-dependent transferases"/>
    <property type="match status" value="1"/>
</dbReference>
<dbReference type="PROSITE" id="PS00595">
    <property type="entry name" value="AA_TRANSFER_CLASS_5"/>
    <property type="match status" value="1"/>
</dbReference>
<protein>
    <recommendedName>
        <fullName evidence="5">(S)-ureidoglycine--glyoxylate transaminase</fullName>
        <shortName evidence="4">UGXT</shortName>
        <ecNumber evidence="2">2.6.1.112</ecNumber>
    </recommendedName>
    <alternativeName>
        <fullName evidence="4">(S)-ureidoglycine--glyoxylate aminotransferase</fullName>
    </alternativeName>
    <alternativeName>
        <fullName evidence="5">Purine catabolism protein PucG</fullName>
    </alternativeName>
</protein>
<proteinExistence type="evidence at protein level"/>
<sequence length="416" mass="45743">MSGRRELCTPLRTIMTPGPVEVDPRVLRVMSTPVVGQFDPAFTGIMNETMEMLRELFQTKNRWAYPIDGTSRAGIEAVLASVIEPEDDVLIPIYGRFGYLLTEIAERYGANVHMLECEWGTVFDPEDIIREIKKVKPKIVAMVHGETSTGRIHPLKAIGEACRTEDALFIVDAVATIGGCEVKVDEWKIDAAIGGTQKCLSVPSGMAPITYNERVADVIAARKKVERGIATQADRAALSGNRPITSNYFDLSQLEDYWSERRLNHHTEATTMLYALREGVRLVLEEGLETRFERHRHHEAALAAGIKAMGLRLFGDDSCKMPVVTCVEIPGGIDGESVRDMLLAQFGIEIASSFGPLAGKIWRIGTMGYSCRKENVLFVLAGLEAVLLRHNAGIEAGKALQAALDVYENAGRQAAV</sequence>
<accession>O32148</accession>
<organism>
    <name type="scientific">Bacillus subtilis (strain 168)</name>
    <dbReference type="NCBI Taxonomy" id="224308"/>
    <lineage>
        <taxon>Bacteria</taxon>
        <taxon>Bacillati</taxon>
        <taxon>Bacillota</taxon>
        <taxon>Bacilli</taxon>
        <taxon>Bacillales</taxon>
        <taxon>Bacillaceae</taxon>
        <taxon>Bacillus</taxon>
    </lineage>
</organism>
<keyword id="KW-0002">3D-structure</keyword>
<keyword id="KW-0032">Aminotransferase</keyword>
<keyword id="KW-0659">Purine metabolism</keyword>
<keyword id="KW-0663">Pyridoxal phosphate</keyword>
<keyword id="KW-1185">Reference proteome</keyword>
<keyword id="KW-0808">Transferase</keyword>
<gene>
    <name evidence="3" type="primary">pucG</name>
    <name type="synonym">yurG</name>
    <name type="ordered locus">BSU32520</name>
</gene>
<reference key="1">
    <citation type="journal article" date="1997" name="Nature">
        <title>The complete genome sequence of the Gram-positive bacterium Bacillus subtilis.</title>
        <authorList>
            <person name="Kunst F."/>
            <person name="Ogasawara N."/>
            <person name="Moszer I."/>
            <person name="Albertini A.M."/>
            <person name="Alloni G."/>
            <person name="Azevedo V."/>
            <person name="Bertero M.G."/>
            <person name="Bessieres P."/>
            <person name="Bolotin A."/>
            <person name="Borchert S."/>
            <person name="Borriss R."/>
            <person name="Boursier L."/>
            <person name="Brans A."/>
            <person name="Braun M."/>
            <person name="Brignell S.C."/>
            <person name="Bron S."/>
            <person name="Brouillet S."/>
            <person name="Bruschi C.V."/>
            <person name="Caldwell B."/>
            <person name="Capuano V."/>
            <person name="Carter N.M."/>
            <person name="Choi S.-K."/>
            <person name="Codani J.-J."/>
            <person name="Connerton I.F."/>
            <person name="Cummings N.J."/>
            <person name="Daniel R.A."/>
            <person name="Denizot F."/>
            <person name="Devine K.M."/>
            <person name="Duesterhoeft A."/>
            <person name="Ehrlich S.D."/>
            <person name="Emmerson P.T."/>
            <person name="Entian K.-D."/>
            <person name="Errington J."/>
            <person name="Fabret C."/>
            <person name="Ferrari E."/>
            <person name="Foulger D."/>
            <person name="Fritz C."/>
            <person name="Fujita M."/>
            <person name="Fujita Y."/>
            <person name="Fuma S."/>
            <person name="Galizzi A."/>
            <person name="Galleron N."/>
            <person name="Ghim S.-Y."/>
            <person name="Glaser P."/>
            <person name="Goffeau A."/>
            <person name="Golightly E.J."/>
            <person name="Grandi G."/>
            <person name="Guiseppi G."/>
            <person name="Guy B.J."/>
            <person name="Haga K."/>
            <person name="Haiech J."/>
            <person name="Harwood C.R."/>
            <person name="Henaut A."/>
            <person name="Hilbert H."/>
            <person name="Holsappel S."/>
            <person name="Hosono S."/>
            <person name="Hullo M.-F."/>
            <person name="Itaya M."/>
            <person name="Jones L.-M."/>
            <person name="Joris B."/>
            <person name="Karamata D."/>
            <person name="Kasahara Y."/>
            <person name="Klaerr-Blanchard M."/>
            <person name="Klein C."/>
            <person name="Kobayashi Y."/>
            <person name="Koetter P."/>
            <person name="Koningstein G."/>
            <person name="Krogh S."/>
            <person name="Kumano M."/>
            <person name="Kurita K."/>
            <person name="Lapidus A."/>
            <person name="Lardinois S."/>
            <person name="Lauber J."/>
            <person name="Lazarevic V."/>
            <person name="Lee S.-M."/>
            <person name="Levine A."/>
            <person name="Liu H."/>
            <person name="Masuda S."/>
            <person name="Mauel C."/>
            <person name="Medigue C."/>
            <person name="Medina N."/>
            <person name="Mellado R.P."/>
            <person name="Mizuno M."/>
            <person name="Moestl D."/>
            <person name="Nakai S."/>
            <person name="Noback M."/>
            <person name="Noone D."/>
            <person name="O'Reilly M."/>
            <person name="Ogawa K."/>
            <person name="Ogiwara A."/>
            <person name="Oudega B."/>
            <person name="Park S.-H."/>
            <person name="Parro V."/>
            <person name="Pohl T.M."/>
            <person name="Portetelle D."/>
            <person name="Porwollik S."/>
            <person name="Prescott A.M."/>
            <person name="Presecan E."/>
            <person name="Pujic P."/>
            <person name="Purnelle B."/>
            <person name="Rapoport G."/>
            <person name="Rey M."/>
            <person name="Reynolds S."/>
            <person name="Rieger M."/>
            <person name="Rivolta C."/>
            <person name="Rocha E."/>
            <person name="Roche B."/>
            <person name="Rose M."/>
            <person name="Sadaie Y."/>
            <person name="Sato T."/>
            <person name="Scanlan E."/>
            <person name="Schleich S."/>
            <person name="Schroeter R."/>
            <person name="Scoffone F."/>
            <person name="Sekiguchi J."/>
            <person name="Sekowska A."/>
            <person name="Seror S.J."/>
            <person name="Serror P."/>
            <person name="Shin B.-S."/>
            <person name="Soldo B."/>
            <person name="Sorokin A."/>
            <person name="Tacconi E."/>
            <person name="Takagi T."/>
            <person name="Takahashi H."/>
            <person name="Takemaru K."/>
            <person name="Takeuchi M."/>
            <person name="Tamakoshi A."/>
            <person name="Tanaka T."/>
            <person name="Terpstra P."/>
            <person name="Tognoni A."/>
            <person name="Tosato V."/>
            <person name="Uchiyama S."/>
            <person name="Vandenbol M."/>
            <person name="Vannier F."/>
            <person name="Vassarotti A."/>
            <person name="Viari A."/>
            <person name="Wambutt R."/>
            <person name="Wedler E."/>
            <person name="Wedler H."/>
            <person name="Weitzenegger T."/>
            <person name="Winters P."/>
            <person name="Wipat A."/>
            <person name="Yamamoto H."/>
            <person name="Yamane K."/>
            <person name="Yasumoto K."/>
            <person name="Yata K."/>
            <person name="Yoshida K."/>
            <person name="Yoshikawa H.-F."/>
            <person name="Zumstein E."/>
            <person name="Yoshikawa H."/>
            <person name="Danchin A."/>
        </authorList>
    </citation>
    <scope>NUCLEOTIDE SEQUENCE [LARGE SCALE GENOMIC DNA]</scope>
    <source>
        <strain>168</strain>
    </source>
</reference>
<reference key="2">
    <citation type="journal article" date="2001" name="J. Bacteriol.">
        <title>Functional analysis of 14 genes that constitute the purine catabolic pathway in Bacillus subtilis and evidence for a novel regulon controlled by the PucR transcription activator.</title>
        <authorList>
            <person name="Schultz A.C."/>
            <person name="Nygaard P."/>
            <person name="Saxild H.H."/>
        </authorList>
    </citation>
    <scope>INDUCTION</scope>
    <scope>PATHWAY</scope>
    <source>
        <strain>168</strain>
    </source>
</reference>
<reference evidence="8" key="3">
    <citation type="journal article" date="2010" name="Nat. Chem. Biol.">
        <title>An aminotransferase branch point connects purine catabolism to amino acid recycling.</title>
        <authorList>
            <person name="Ramazzina I."/>
            <person name="Costa R."/>
            <person name="Cendron L."/>
            <person name="Berni R."/>
            <person name="Peracchi A."/>
            <person name="Zanotti G."/>
            <person name="Percudani R."/>
        </authorList>
    </citation>
    <scope>X-RAY CRYSTALLOGRAPHY (2.06 ANGSTROMS) IN COMPLEX WITH PYRIDOXAL PHOSPHATE</scope>
    <scope>FUNCTION</scope>
    <scope>CATALYTIC ACTIVITY</scope>
    <scope>REACTION MECHANISM</scope>
    <scope>COFACTOR</scope>
    <scope>PATHWAY</scope>
    <scope>SUBUNIT</scope>
    <scope>PYRIDOXAL PHOSPHATE AT LYS-198</scope>
    <scope>MUTAGENESIS OF GLN-37 AND ASN-264</scope>
</reference>